<evidence type="ECO:0000269" key="1">
    <source>
    </source>
</evidence>
<evidence type="ECO:0000305" key="2"/>
<organism>
    <name type="scientific">Calliphora vomitoria</name>
    <name type="common">Blue bottle fly</name>
    <name type="synonym">Musca vomitoria</name>
    <dbReference type="NCBI Taxonomy" id="27454"/>
    <lineage>
        <taxon>Eukaryota</taxon>
        <taxon>Metazoa</taxon>
        <taxon>Ecdysozoa</taxon>
        <taxon>Arthropoda</taxon>
        <taxon>Hexapoda</taxon>
        <taxon>Insecta</taxon>
        <taxon>Pterygota</taxon>
        <taxon>Neoptera</taxon>
        <taxon>Endopterygota</taxon>
        <taxon>Diptera</taxon>
        <taxon>Brachycera</taxon>
        <taxon>Muscomorpha</taxon>
        <taxon>Oestroidea</taxon>
        <taxon>Calliphoridae</taxon>
        <taxon>Calliphorinae</taxon>
        <taxon>Calliphora</taxon>
    </lineage>
</organism>
<comment type="subcellular location">
    <subcellularLocation>
        <location>Secreted</location>
    </subcellularLocation>
</comment>
<comment type="similarity">
    <text evidence="2">Belongs to the FARP (FMRFamide related peptide) family.</text>
</comment>
<proteinExistence type="evidence at protein level"/>
<reference key="1">
    <citation type="journal article" date="1992" name="Proc. Natl. Acad. Sci. U.S.A.">
        <title>Isolation, structure, and activity of -Phe-Met-Arg-Phe-NH2 neuropeptides (designated calliFMRFamides) from the blowfly Calliphora vomitoria.</title>
        <authorList>
            <person name="Duve H."/>
            <person name="Johnsen A.H."/>
            <person name="Sewell J.C."/>
            <person name="Scott A.G."/>
            <person name="Orchard I."/>
            <person name="Rehfeld J.F."/>
            <person name="Thorpe A."/>
        </authorList>
    </citation>
    <scope>PROTEIN SEQUENCE</scope>
    <scope>AMIDATION AT PHE-12</scope>
    <source>
        <tissue>Thoracic ganglion</tissue>
    </source>
</reference>
<protein>
    <recommendedName>
        <fullName>CalliMIRFamide-1</fullName>
    </recommendedName>
</protein>
<sequence>APNQPSDNMIRF</sequence>
<keyword id="KW-0027">Amidation</keyword>
<keyword id="KW-0903">Direct protein sequencing</keyword>
<keyword id="KW-0527">Neuropeptide</keyword>
<keyword id="KW-0964">Secreted</keyword>
<dbReference type="PIR" id="E44787">
    <property type="entry name" value="E44787"/>
</dbReference>
<dbReference type="GO" id="GO:0005576">
    <property type="term" value="C:extracellular region"/>
    <property type="evidence" value="ECO:0007669"/>
    <property type="project" value="UniProtKB-SubCell"/>
</dbReference>
<dbReference type="GO" id="GO:0007218">
    <property type="term" value="P:neuropeptide signaling pathway"/>
    <property type="evidence" value="ECO:0007669"/>
    <property type="project" value="UniProtKB-KW"/>
</dbReference>
<name>FARI_CALVO</name>
<feature type="peptide" id="PRO_0000043676" description="CalliMIRFamide-1">
    <location>
        <begin position="1"/>
        <end position="12"/>
    </location>
</feature>
<feature type="modified residue" description="Phenylalanine amide" evidence="1">
    <location>
        <position position="12"/>
    </location>
</feature>
<accession>P41869</accession>